<reference key="1">
    <citation type="journal article" date="2000" name="DNA Res.">
        <title>Structural analysis of Arabidopsis thaliana chromosome 3. II. Sequence features of the 4,251,695 bp regions covered by 90 P1, TAC and BAC clones.</title>
        <authorList>
            <person name="Kaneko T."/>
            <person name="Katoh T."/>
            <person name="Sato S."/>
            <person name="Nakamura Y."/>
            <person name="Asamizu E."/>
            <person name="Tabata S."/>
        </authorList>
    </citation>
    <scope>NUCLEOTIDE SEQUENCE [LARGE SCALE GENOMIC DNA]</scope>
    <source>
        <strain>cv. Columbia</strain>
    </source>
</reference>
<reference key="2">
    <citation type="journal article" date="2017" name="Plant J.">
        <title>Araport11: a complete reannotation of the Arabidopsis thaliana reference genome.</title>
        <authorList>
            <person name="Cheng C.Y."/>
            <person name="Krishnakumar V."/>
            <person name="Chan A.P."/>
            <person name="Thibaud-Nissen F."/>
            <person name="Schobel S."/>
            <person name="Town C.D."/>
        </authorList>
    </citation>
    <scope>GENOME REANNOTATION</scope>
    <source>
        <strain>cv. Columbia</strain>
    </source>
</reference>
<reference key="3">
    <citation type="journal article" date="2015" name="Plant J.">
        <title>Repression of jasmonate signaling by a non-TIFY JAZ protein in Arabidopsis.</title>
        <authorList>
            <person name="Thireault C."/>
            <person name="Shyu C."/>
            <person name="Yoshida Y."/>
            <person name="St Aubin B."/>
            <person name="Campos M.L."/>
            <person name="Howe G.A."/>
        </authorList>
    </citation>
    <scope>FUNCTION</scope>
    <scope>DOMAIN</scope>
    <scope>INDUCTION</scope>
    <scope>SUBUNIT</scope>
    <scope>INTERACTION WITH MYC2 AND TPL</scope>
</reference>
<dbReference type="EMBL" id="AP002046">
    <property type="protein sequence ID" value="BAB01946.1"/>
    <property type="status" value="ALT_SEQ"/>
    <property type="molecule type" value="Genomic_DNA"/>
</dbReference>
<dbReference type="EMBL" id="CP002686">
    <property type="protein sequence ID" value="AEE76617.1"/>
    <property type="molecule type" value="Genomic_DNA"/>
</dbReference>
<dbReference type="RefSeq" id="NP_001078200.1">
    <property type="nucleotide sequence ID" value="NM_001084731.2"/>
</dbReference>
<dbReference type="STRING" id="3702.F4J078"/>
<dbReference type="PaxDb" id="3702-AT3G22275.1"/>
<dbReference type="ProteomicsDB" id="250666"/>
<dbReference type="EnsemblPlants" id="AT3G22275.1">
    <property type="protein sequence ID" value="AT3G22275.1"/>
    <property type="gene ID" value="AT3G22275"/>
</dbReference>
<dbReference type="GeneID" id="5008022"/>
<dbReference type="Gramene" id="AT3G22275.1">
    <property type="protein sequence ID" value="AT3G22275.1"/>
    <property type="gene ID" value="AT3G22275"/>
</dbReference>
<dbReference type="KEGG" id="ath:AT3G22275"/>
<dbReference type="Araport" id="AT3G22275"/>
<dbReference type="TAIR" id="AT3G22275">
    <property type="gene designation" value="JAZ13"/>
</dbReference>
<dbReference type="eggNOG" id="ENOG502R6NN">
    <property type="taxonomic scope" value="Eukaryota"/>
</dbReference>
<dbReference type="HOGENOM" id="CLU_2018334_0_0_1"/>
<dbReference type="InParanoid" id="F4J078"/>
<dbReference type="OMA" id="QSCHQDS"/>
<dbReference type="OrthoDB" id="782771at2759"/>
<dbReference type="PRO" id="PR:F4J078"/>
<dbReference type="Proteomes" id="UP000006548">
    <property type="component" value="Chromosome 3"/>
</dbReference>
<dbReference type="ExpressionAtlas" id="F4J078">
    <property type="expression patterns" value="baseline and differential"/>
</dbReference>
<dbReference type="GO" id="GO:0003714">
    <property type="term" value="F:transcription corepressor activity"/>
    <property type="evidence" value="ECO:0000315"/>
    <property type="project" value="TAIR"/>
</dbReference>
<dbReference type="GO" id="GO:0006952">
    <property type="term" value="P:defense response"/>
    <property type="evidence" value="ECO:0007669"/>
    <property type="project" value="UniProtKB-KW"/>
</dbReference>
<dbReference type="GO" id="GO:0009867">
    <property type="term" value="P:jasmonic acid mediated signaling pathway"/>
    <property type="evidence" value="ECO:0000315"/>
    <property type="project" value="TAIR"/>
</dbReference>
<gene>
    <name evidence="3" type="primary">JAZ13</name>
    <name evidence="6" type="ordered locus">At3g22275</name>
    <name evidence="7" type="ORF">MMP21.6</name>
</gene>
<keyword id="KW-1184">Jasmonic acid signaling pathway</keyword>
<keyword id="KW-0597">Phosphoprotein</keyword>
<keyword id="KW-0611">Plant defense</keyword>
<keyword id="KW-1185">Reference proteome</keyword>
<keyword id="KW-0804">Transcription</keyword>
<keyword id="KW-0805">Transcription regulation</keyword>
<proteinExistence type="evidence at protein level"/>
<comment type="function">
    <text evidence="2">Non-TIFY functional repressor of jasmonate (JA)-mediated growth and defense responses. Intrinsically resistant to JA-induced turnover, probably due to the absence of the canonical degron that strongly interacts with COI1 in the presence of JA-Ile in the TIFY/JAZ proteins.</text>
</comment>
<comment type="subunit">
    <text evidence="2">Monomer. Lack of homodimerization, and very weak or no interaction with AFPH2/NINJA and other JAZ proteins. Interacts (via EAR motif) with TPL. Interacts (via jas motif) with MYC2.</text>
</comment>
<comment type="induction">
    <text evidence="2">Up-regulated by mechanical wounding, and methyl jasmonate or coronatine treatments.</text>
</comment>
<comment type="domain">
    <text evidence="2">The jas motif (82-103) lacks the canonical degron LPIARR that strongly interacts with COI1 in the presence of JA-Ile in other TIFY/JAZ proteins. Contains 1 EAR motif required for the interaction with TPL.</text>
</comment>
<comment type="PTM">
    <text evidence="5">Phosphorylated at multiple serine residues.</text>
</comment>
<comment type="sequence caution" evidence="4">
    <conflict type="erroneous gene model prediction">
        <sequence resource="EMBL-CDS" id="BAB01946"/>
    </conflict>
</comment>
<protein>
    <recommendedName>
        <fullName evidence="3">Protein JAZ13</fullName>
    </recommendedName>
    <alternativeName>
        <fullName evidence="3">Jasmonate ZIM domain-containing protein 13</fullName>
    </alternativeName>
</protein>
<sequence>MKGCSLDLHLSPMASTLQSCHQDSTVNDRSSTIRSKEINAFYSGRLSEYDLVEIQMRAIIEMASKDREVTALELVPVRLESPLGCSVKRSVKRFLEKRKKRSKSFTLTPNYTSSTSSSSSSLHNF</sequence>
<accession>F4J078</accession>
<accession>Q9LHI9</accession>
<evidence type="ECO:0000256" key="1">
    <source>
        <dbReference type="SAM" id="MobiDB-lite"/>
    </source>
</evidence>
<evidence type="ECO:0000269" key="2">
    <source>
    </source>
</evidence>
<evidence type="ECO:0000303" key="3">
    <source>
    </source>
</evidence>
<evidence type="ECO:0000305" key="4"/>
<evidence type="ECO:0000305" key="5">
    <source>
    </source>
</evidence>
<evidence type="ECO:0000312" key="6">
    <source>
        <dbReference type="Araport" id="AT3G22275"/>
    </source>
</evidence>
<evidence type="ECO:0000312" key="7">
    <source>
        <dbReference type="EMBL" id="BAB01946.1"/>
    </source>
</evidence>
<evidence type="ECO:0000312" key="8">
    <source>
        <dbReference type="Proteomes" id="UP000006548"/>
    </source>
</evidence>
<organism evidence="8">
    <name type="scientific">Arabidopsis thaliana</name>
    <name type="common">Mouse-ear cress</name>
    <dbReference type="NCBI Taxonomy" id="3702"/>
    <lineage>
        <taxon>Eukaryota</taxon>
        <taxon>Viridiplantae</taxon>
        <taxon>Streptophyta</taxon>
        <taxon>Embryophyta</taxon>
        <taxon>Tracheophyta</taxon>
        <taxon>Spermatophyta</taxon>
        <taxon>Magnoliopsida</taxon>
        <taxon>eudicotyledons</taxon>
        <taxon>Gunneridae</taxon>
        <taxon>Pentapetalae</taxon>
        <taxon>rosids</taxon>
        <taxon>malvids</taxon>
        <taxon>Brassicales</taxon>
        <taxon>Brassicaceae</taxon>
        <taxon>Camelineae</taxon>
        <taxon>Arabidopsis</taxon>
    </lineage>
</organism>
<feature type="chain" id="PRO_0000435865" description="Protein JAZ13">
    <location>
        <begin position="1"/>
        <end position="125"/>
    </location>
</feature>
<feature type="region of interest" description="Disordered" evidence="1">
    <location>
        <begin position="99"/>
        <end position="125"/>
    </location>
</feature>
<feature type="short sequence motif" description="EAR" evidence="4">
    <location>
        <begin position="6"/>
        <end position="10"/>
    </location>
</feature>
<feature type="compositionally biased region" description="Low complexity" evidence="1">
    <location>
        <begin position="112"/>
        <end position="125"/>
    </location>
</feature>
<name>JAZ13_ARATH</name>